<evidence type="ECO:0000250" key="1">
    <source>
        <dbReference type="UniProtKB" id="P19955"/>
    </source>
</evidence>
<evidence type="ECO:0000305" key="2"/>
<accession>G2TRP3</accession>
<keyword id="KW-0496">Mitochondrion</keyword>
<keyword id="KW-1185">Reference proteome</keyword>
<keyword id="KW-0809">Transit peptide</keyword>
<protein>
    <recommendedName>
        <fullName>Alpha-ketoglutarate dehydrogenase subunit 4, mitochondrial</fullName>
        <shortName>alpha-KGDH subunit 4</shortName>
    </recommendedName>
    <alternativeName>
        <fullName>2-oxoglutarate dehydrogenase complex component 4</fullName>
        <shortName>OGDHC subunit 4</shortName>
    </alternativeName>
</protein>
<feature type="transit peptide" description="Mitochondrion">
    <location>
        <begin position="1"/>
        <end status="unknown"/>
    </location>
</feature>
<feature type="chain" id="PRO_0000416666" description="Alpha-ketoglutarate dehydrogenase subunit 4, mitochondrial">
    <location>
        <begin status="unknown"/>
        <end position="89"/>
    </location>
</feature>
<proteinExistence type="inferred from homology"/>
<gene>
    <name type="primary">kgd4</name>
    <name type="synonym">ymr31</name>
    <name type="ORF">SPBC21B10.14</name>
</gene>
<name>KGD4_SCHPO</name>
<dbReference type="EMBL" id="CU329671">
    <property type="protein sequence ID" value="CCD31362.1"/>
    <property type="molecule type" value="Genomic_DNA"/>
</dbReference>
<dbReference type="RefSeq" id="XP_004001709.1">
    <property type="nucleotide sequence ID" value="XM_004001660.1"/>
</dbReference>
<dbReference type="STRING" id="284812.G2TRP3"/>
<dbReference type="PaxDb" id="4896-SPBC21B10.14.1"/>
<dbReference type="EnsemblFungi" id="SPBC21B10.14.1">
    <property type="protein sequence ID" value="SPBC21B10.14.1:pep"/>
    <property type="gene ID" value="SPBC21B10.14"/>
</dbReference>
<dbReference type="PomBase" id="SPBC21B10.14">
    <property type="gene designation" value="kgd4"/>
</dbReference>
<dbReference type="VEuPathDB" id="FungiDB:SPBC21B10.14"/>
<dbReference type="HOGENOM" id="CLU_2499156_0_0_1"/>
<dbReference type="InParanoid" id="G2TRP3"/>
<dbReference type="OMA" id="PRFHRMP"/>
<dbReference type="Reactome" id="R-SPO-6783984">
    <property type="pathway name" value="Glycine degradation"/>
</dbReference>
<dbReference type="Reactome" id="R-SPO-9853506">
    <property type="pathway name" value="OGDH complex synthesizes succinyl-CoA from 2-OG"/>
</dbReference>
<dbReference type="PRO" id="PR:G2TRP3"/>
<dbReference type="Proteomes" id="UP000002485">
    <property type="component" value="Chromosome II"/>
</dbReference>
<dbReference type="GO" id="GO:0005743">
    <property type="term" value="C:mitochondrial inner membrane"/>
    <property type="evidence" value="ECO:0000266"/>
    <property type="project" value="PomBase"/>
</dbReference>
<dbReference type="GO" id="GO:0045252">
    <property type="term" value="C:oxoglutarate dehydrogenase complex"/>
    <property type="evidence" value="ECO:0000318"/>
    <property type="project" value="GO_Central"/>
</dbReference>
<dbReference type="GO" id="GO:0006103">
    <property type="term" value="P:2-oxoglutarate metabolic process"/>
    <property type="evidence" value="ECO:0000318"/>
    <property type="project" value="GO_Central"/>
</dbReference>
<dbReference type="GO" id="GO:0006099">
    <property type="term" value="P:tricarboxylic acid cycle"/>
    <property type="evidence" value="ECO:0000266"/>
    <property type="project" value="PomBase"/>
</dbReference>
<dbReference type="InterPro" id="IPR020373">
    <property type="entry name" value="Kgd4/YMR-31"/>
</dbReference>
<dbReference type="Pfam" id="PF10937">
    <property type="entry name" value="Kgd4-YMR31"/>
    <property type="match status" value="1"/>
</dbReference>
<sequence>MVRKILIDFTKHITKSSLERHPHPAASFPLPASFTTVDSGPAKHSTAPPATPETSILVEDRNELPLRFHRLPVSEAEMQAVESGGAYAF</sequence>
<organism>
    <name type="scientific">Schizosaccharomyces pombe (strain 972 / ATCC 24843)</name>
    <name type="common">Fission yeast</name>
    <dbReference type="NCBI Taxonomy" id="284812"/>
    <lineage>
        <taxon>Eukaryota</taxon>
        <taxon>Fungi</taxon>
        <taxon>Dikarya</taxon>
        <taxon>Ascomycota</taxon>
        <taxon>Taphrinomycotina</taxon>
        <taxon>Schizosaccharomycetes</taxon>
        <taxon>Schizosaccharomycetales</taxon>
        <taxon>Schizosaccharomycetaceae</taxon>
        <taxon>Schizosaccharomyces</taxon>
    </lineage>
</organism>
<reference key="1">
    <citation type="journal article" date="2002" name="Nature">
        <title>The genome sequence of Schizosaccharomyces pombe.</title>
        <authorList>
            <person name="Wood V."/>
            <person name="Gwilliam R."/>
            <person name="Rajandream M.A."/>
            <person name="Lyne M.H."/>
            <person name="Lyne R."/>
            <person name="Stewart A."/>
            <person name="Sgouros J.G."/>
            <person name="Peat N."/>
            <person name="Hayles J."/>
            <person name="Baker S.G."/>
            <person name="Basham D."/>
            <person name="Bowman S."/>
            <person name="Brooks K."/>
            <person name="Brown D."/>
            <person name="Brown S."/>
            <person name="Chillingworth T."/>
            <person name="Churcher C.M."/>
            <person name="Collins M."/>
            <person name="Connor R."/>
            <person name="Cronin A."/>
            <person name="Davis P."/>
            <person name="Feltwell T."/>
            <person name="Fraser A."/>
            <person name="Gentles S."/>
            <person name="Goble A."/>
            <person name="Hamlin N."/>
            <person name="Harris D.E."/>
            <person name="Hidalgo J."/>
            <person name="Hodgson G."/>
            <person name="Holroyd S."/>
            <person name="Hornsby T."/>
            <person name="Howarth S."/>
            <person name="Huckle E.J."/>
            <person name="Hunt S."/>
            <person name="Jagels K."/>
            <person name="James K.D."/>
            <person name="Jones L."/>
            <person name="Jones M."/>
            <person name="Leather S."/>
            <person name="McDonald S."/>
            <person name="McLean J."/>
            <person name="Mooney P."/>
            <person name="Moule S."/>
            <person name="Mungall K.L."/>
            <person name="Murphy L.D."/>
            <person name="Niblett D."/>
            <person name="Odell C."/>
            <person name="Oliver K."/>
            <person name="O'Neil S."/>
            <person name="Pearson D."/>
            <person name="Quail M.A."/>
            <person name="Rabbinowitsch E."/>
            <person name="Rutherford K.M."/>
            <person name="Rutter S."/>
            <person name="Saunders D."/>
            <person name="Seeger K."/>
            <person name="Sharp S."/>
            <person name="Skelton J."/>
            <person name="Simmonds M.N."/>
            <person name="Squares R."/>
            <person name="Squares S."/>
            <person name="Stevens K."/>
            <person name="Taylor K."/>
            <person name="Taylor R.G."/>
            <person name="Tivey A."/>
            <person name="Walsh S.V."/>
            <person name="Warren T."/>
            <person name="Whitehead S."/>
            <person name="Woodward J.R."/>
            <person name="Volckaert G."/>
            <person name="Aert R."/>
            <person name="Robben J."/>
            <person name="Grymonprez B."/>
            <person name="Weltjens I."/>
            <person name="Vanstreels E."/>
            <person name="Rieger M."/>
            <person name="Schaefer M."/>
            <person name="Mueller-Auer S."/>
            <person name="Gabel C."/>
            <person name="Fuchs M."/>
            <person name="Duesterhoeft A."/>
            <person name="Fritzc C."/>
            <person name="Holzer E."/>
            <person name="Moestl D."/>
            <person name="Hilbert H."/>
            <person name="Borzym K."/>
            <person name="Langer I."/>
            <person name="Beck A."/>
            <person name="Lehrach H."/>
            <person name="Reinhardt R."/>
            <person name="Pohl T.M."/>
            <person name="Eger P."/>
            <person name="Zimmermann W."/>
            <person name="Wedler H."/>
            <person name="Wambutt R."/>
            <person name="Purnelle B."/>
            <person name="Goffeau A."/>
            <person name="Cadieu E."/>
            <person name="Dreano S."/>
            <person name="Gloux S."/>
            <person name="Lelaure V."/>
            <person name="Mottier S."/>
            <person name="Galibert F."/>
            <person name="Aves S.J."/>
            <person name="Xiang Z."/>
            <person name="Hunt C."/>
            <person name="Moore K."/>
            <person name="Hurst S.M."/>
            <person name="Lucas M."/>
            <person name="Rochet M."/>
            <person name="Gaillardin C."/>
            <person name="Tallada V.A."/>
            <person name="Garzon A."/>
            <person name="Thode G."/>
            <person name="Daga R.R."/>
            <person name="Cruzado L."/>
            <person name="Jimenez J."/>
            <person name="Sanchez M."/>
            <person name="del Rey F."/>
            <person name="Benito J."/>
            <person name="Dominguez A."/>
            <person name="Revuelta J.L."/>
            <person name="Moreno S."/>
            <person name="Armstrong J."/>
            <person name="Forsburg S.L."/>
            <person name="Cerutti L."/>
            <person name="Lowe T."/>
            <person name="McCombie W.R."/>
            <person name="Paulsen I."/>
            <person name="Potashkin J."/>
            <person name="Shpakovski G.V."/>
            <person name="Ussery D."/>
            <person name="Barrell B.G."/>
            <person name="Nurse P."/>
        </authorList>
    </citation>
    <scope>NUCLEOTIDE SEQUENCE [LARGE SCALE GENOMIC DNA]</scope>
    <source>
        <strain>972 / ATCC 24843</strain>
    </source>
</reference>
<reference key="2">
    <citation type="journal article" date="2011" name="Science">
        <title>Comparative functional genomics of the fission yeasts.</title>
        <authorList>
            <person name="Rhind N."/>
            <person name="Chen Z."/>
            <person name="Yassour M."/>
            <person name="Thompson D.A."/>
            <person name="Haas B.J."/>
            <person name="Habib N."/>
            <person name="Wapinski I."/>
            <person name="Roy S."/>
            <person name="Lin M.F."/>
            <person name="Heiman D.I."/>
            <person name="Young S.K."/>
            <person name="Furuya K."/>
            <person name="Guo Y."/>
            <person name="Pidoux A."/>
            <person name="Chen H.M."/>
            <person name="Robbertse B."/>
            <person name="Goldberg J.M."/>
            <person name="Aoki K."/>
            <person name="Bayne E.H."/>
            <person name="Berlin A.M."/>
            <person name="Desjardins C.A."/>
            <person name="Dobbs E."/>
            <person name="Dukaj L."/>
            <person name="Fan L."/>
            <person name="FitzGerald M.G."/>
            <person name="French C."/>
            <person name="Gujja S."/>
            <person name="Hansen K."/>
            <person name="Keifenheim D."/>
            <person name="Levin J.Z."/>
            <person name="Mosher R.A."/>
            <person name="Mueller C.A."/>
            <person name="Pfiffner J."/>
            <person name="Priest M."/>
            <person name="Russ C."/>
            <person name="Smialowska A."/>
            <person name="Swoboda P."/>
            <person name="Sykes S.M."/>
            <person name="Vaughn M."/>
            <person name="Vengrova S."/>
            <person name="Yoder R."/>
            <person name="Zeng Q."/>
            <person name="Allshire R."/>
            <person name="Baulcombe D."/>
            <person name="Birren B.W."/>
            <person name="Brown W."/>
            <person name="Ekwall K."/>
            <person name="Kellis M."/>
            <person name="Leatherwood J."/>
            <person name="Levin H."/>
            <person name="Margalit H."/>
            <person name="Martienssen R."/>
            <person name="Nieduszynski C.A."/>
            <person name="Spatafora J.W."/>
            <person name="Friedman N."/>
            <person name="Dalgaard J.Z."/>
            <person name="Baumann P."/>
            <person name="Niki H."/>
            <person name="Regev A."/>
            <person name="Nusbaum C."/>
        </authorList>
    </citation>
    <scope>IDENTIFICATION</scope>
</reference>
<comment type="function">
    <text evidence="1">Molecular adapter that is necessary to a form a stable 2-oxoglutarate dehydrogenase enzyme complex (OGDC). Required for incorporation of the E3 subunit (dld1) into the E1-E2 core (kgd1-kgd2) of mitochondrial OGDC, and acting as a stability factor for the fully assembled complex.</text>
</comment>
<comment type="subunit">
    <text evidence="1">Component of the 2-oxoglutarate dehydrogenase complex (OGDC), also called alpha-ketoglutarate dehydrogenase (KGDH) complex. The copmplex is composed of the catalytic subunits OGDH (2-oxoglutarate dehydrogenase kgd1; also called E1 subunit), DLST (dihydrolipoamide succinyltransferase kgd2; also called E2 subunit) and DLD (dihydrolipoamide dehydrogenase dld1; also called E3 subunit), and the assembly factor KGD4. Within OGDC, interacts (via N-terminus) with E3 subunit and (via C-terminus) with the complex core formed by E1 and E2 subunits.</text>
</comment>
<comment type="subcellular location">
    <subcellularLocation>
        <location evidence="1">Mitochondrion</location>
    </subcellularLocation>
</comment>
<comment type="similarity">
    <text evidence="2">Belongs to the alpha-ketoglutarate dehydrogenase component 4 family.</text>
</comment>